<gene>
    <name type="primary">Abtb2</name>
</gene>
<accession>Q7TQI7</accession>
<organism>
    <name type="scientific">Mus musculus</name>
    <name type="common">Mouse</name>
    <dbReference type="NCBI Taxonomy" id="10090"/>
    <lineage>
        <taxon>Eukaryota</taxon>
        <taxon>Metazoa</taxon>
        <taxon>Chordata</taxon>
        <taxon>Craniata</taxon>
        <taxon>Vertebrata</taxon>
        <taxon>Euteleostomi</taxon>
        <taxon>Mammalia</taxon>
        <taxon>Eutheria</taxon>
        <taxon>Euarchontoglires</taxon>
        <taxon>Glires</taxon>
        <taxon>Rodentia</taxon>
        <taxon>Myomorpha</taxon>
        <taxon>Muroidea</taxon>
        <taxon>Muridae</taxon>
        <taxon>Murinae</taxon>
        <taxon>Mus</taxon>
        <taxon>Mus</taxon>
    </lineage>
</organism>
<sequence length="1024" mass="113503">MAGTYSSTLKTLEDLTLDSGYGAGDSCRSLSLSSSKSNSQALNSSAQQHRGAAWWCYSGSMNSRHNSWDTVNTVLPEDPEVADLFSRCPRLPELEEFPWTEGDVARVLRKSVGGRRLPSFSAEAVRRLAGLLRRALIRVAREAQRLSVLHAKCTRFEVQSAVRLVHSWALAESCALAAVKALSLYSMSAGDGLRRGKSARCGLTFSVGRFFRWMVDTRISVRIHEYAAISLTACMENLVEEIRARVLASQSPDGGGAGGGEVSAEALEMVINNDAELWGVLQPYEHLICGKNANGVLSLPAYFSPYNGGSLGHDERADAYAQLELRTLEQSLLATCVGSISELSDLVSRAMHHMQGRHPLCPGTSPARQARQPPQPITWSPDALHTLYYFLRCPQMESMENPNLDPPRMTLNNERPFMLLPPLMEWMRVAITYAEHRRSPTVDSGDIRQAARLLLPGLDCEPRQLKPECCFSSFRRLDARAATERFNQDLGFRMLNCGRTDLISQAIEALGPDGVNTMDDQGMTPLMYACAAGDEAMVQMLIDAGANLDIQVPSHSPRHPSVHPDSRHWTSLTFAVLHGHISVVQLLLDAGAHVEGSAVNSGEDSYAETPLQLASAAGNYELVSLLLSRGADPLLSMLEANGMASSLHEEMNCFSHSAAHGHRNVLRKLLTQPQQAKADVLSLEEILAEGVEESDTSSQGSSEGPVRLSRTRTKALQEAMYYSAEHGYLDITMELRALGVPWKLHIWIESLRTSFSQSRYSVVQSLLKDFSSIKEEEYNEELVTEGLQLMFDILKTSKNDSVLQQLATIFTHCYGTSPIPSIPEIRKTLPARLDPHFLNNKEMSDVTFLVEGKLFYAHKVLLVTASNRFKTLMTNKSEQDGDSSKTIEISDIKYHIFQMLMQYLYYGGTESMEIPTADILQLLSAANLFQLDALQRHCEILCSQTLSVESAVNTYKYAKIHNAPELALFCEGFFLKHMKALLEQDAFRQLIYGRSSKVQGLDPLQDLQSTLAERVHSVYVTSRV</sequence>
<comment type="function">
    <text evidence="1">May be involved in the initiation of hepatocyte growth.</text>
</comment>
<dbReference type="EMBL" id="BC054399">
    <property type="protein sequence ID" value="AAH54399.1"/>
    <property type="molecule type" value="mRNA"/>
</dbReference>
<dbReference type="CCDS" id="CCDS16479.1"/>
<dbReference type="RefSeq" id="NP_849221.2">
    <property type="nucleotide sequence ID" value="NM_178890.3"/>
</dbReference>
<dbReference type="SMR" id="Q7TQI7"/>
<dbReference type="BioGRID" id="221238">
    <property type="interactions" value="2"/>
</dbReference>
<dbReference type="FunCoup" id="Q7TQI7">
    <property type="interactions" value="129"/>
</dbReference>
<dbReference type="STRING" id="10090.ENSMUSP00000075566"/>
<dbReference type="iPTMnet" id="Q7TQI7"/>
<dbReference type="PhosphoSitePlus" id="Q7TQI7"/>
<dbReference type="PaxDb" id="10090-ENSMUSP00000075566"/>
<dbReference type="ProteomicsDB" id="285969"/>
<dbReference type="Pumba" id="Q7TQI7"/>
<dbReference type="Antibodypedia" id="12992">
    <property type="antibodies" value="67 antibodies from 16 providers"/>
</dbReference>
<dbReference type="Ensembl" id="ENSMUST00000076212.4">
    <property type="protein sequence ID" value="ENSMUSP00000075566.4"/>
    <property type="gene ID" value="ENSMUSG00000032724.6"/>
</dbReference>
<dbReference type="GeneID" id="99382"/>
<dbReference type="KEGG" id="mmu:99382"/>
<dbReference type="UCSC" id="uc008lix.1">
    <property type="organism name" value="mouse"/>
</dbReference>
<dbReference type="AGR" id="MGI:2139365"/>
<dbReference type="CTD" id="25841"/>
<dbReference type="MGI" id="MGI:2139365">
    <property type="gene designation" value="Abtb2"/>
</dbReference>
<dbReference type="VEuPathDB" id="HostDB:ENSMUSG00000032724"/>
<dbReference type="eggNOG" id="ENOG502QSQY">
    <property type="taxonomic scope" value="Eukaryota"/>
</dbReference>
<dbReference type="GeneTree" id="ENSGT00940000157661"/>
<dbReference type="HOGENOM" id="CLU_001918_0_0_1"/>
<dbReference type="InParanoid" id="Q7TQI7"/>
<dbReference type="OMA" id="LQCNGST"/>
<dbReference type="OrthoDB" id="2316821at2759"/>
<dbReference type="PhylomeDB" id="Q7TQI7"/>
<dbReference type="TreeFam" id="TF106437"/>
<dbReference type="BioGRID-ORCS" id="99382">
    <property type="hits" value="1 hit in 78 CRISPR screens"/>
</dbReference>
<dbReference type="ChiTaRS" id="Abtb2">
    <property type="organism name" value="mouse"/>
</dbReference>
<dbReference type="PRO" id="PR:Q7TQI7"/>
<dbReference type="Proteomes" id="UP000000589">
    <property type="component" value="Chromosome 2"/>
</dbReference>
<dbReference type="RNAct" id="Q7TQI7">
    <property type="molecule type" value="protein"/>
</dbReference>
<dbReference type="Bgee" id="ENSMUSG00000032724">
    <property type="expression patterns" value="Expressed in stria vascularis of cochlear duct and 260 other cell types or tissues"/>
</dbReference>
<dbReference type="ExpressionAtlas" id="Q7TQI7">
    <property type="expression patterns" value="baseline and differential"/>
</dbReference>
<dbReference type="GO" id="GO:0046982">
    <property type="term" value="F:protein heterodimerization activity"/>
    <property type="evidence" value="ECO:0007669"/>
    <property type="project" value="InterPro"/>
</dbReference>
<dbReference type="GO" id="GO:0097237">
    <property type="term" value="P:cellular response to toxic substance"/>
    <property type="evidence" value="ECO:0000315"/>
    <property type="project" value="MGI"/>
</dbReference>
<dbReference type="CDD" id="cd18526">
    <property type="entry name" value="BACK_ABTB2"/>
    <property type="match status" value="1"/>
</dbReference>
<dbReference type="CDD" id="cd18350">
    <property type="entry name" value="BTB_POZ_ABTB2_BPOZ2"/>
    <property type="match status" value="1"/>
</dbReference>
<dbReference type="CDD" id="cd22913">
    <property type="entry name" value="HFD_ABTB2-like"/>
    <property type="match status" value="1"/>
</dbReference>
<dbReference type="FunFam" id="1.25.40.20:FF:000045">
    <property type="entry name" value="Ankyrin repeat and BTB/POZ domain-containing protein 2"/>
    <property type="match status" value="1"/>
</dbReference>
<dbReference type="FunFam" id="1.10.20.10:FF:000057">
    <property type="entry name" value="ankyrin repeat and BTB/POZ domain-containing protein 2"/>
    <property type="match status" value="1"/>
</dbReference>
<dbReference type="FunFam" id="3.30.710.10:FF:000030">
    <property type="entry name" value="Ankyrin repeat and BTB/POZ domain-containing protein BTBD11"/>
    <property type="match status" value="1"/>
</dbReference>
<dbReference type="Gene3D" id="1.25.40.20">
    <property type="entry name" value="Ankyrin repeat-containing domain"/>
    <property type="match status" value="1"/>
</dbReference>
<dbReference type="Gene3D" id="1.10.20.10">
    <property type="entry name" value="Histone, subunit A"/>
    <property type="match status" value="1"/>
</dbReference>
<dbReference type="Gene3D" id="3.30.710.10">
    <property type="entry name" value="Potassium Channel Kv1.1, Chain A"/>
    <property type="match status" value="1"/>
</dbReference>
<dbReference type="InterPro" id="IPR048063">
    <property type="entry name" value="ABTB2_BTB_POZ"/>
</dbReference>
<dbReference type="InterPro" id="IPR052089">
    <property type="entry name" value="Ankyrin-BTB/POZ_domain"/>
</dbReference>
<dbReference type="InterPro" id="IPR002110">
    <property type="entry name" value="Ankyrin_rpt"/>
</dbReference>
<dbReference type="InterPro" id="IPR036770">
    <property type="entry name" value="Ankyrin_rpt-contain_sf"/>
</dbReference>
<dbReference type="InterPro" id="IPR000210">
    <property type="entry name" value="BTB/POZ_dom"/>
</dbReference>
<dbReference type="InterPro" id="IPR009072">
    <property type="entry name" value="Histone-fold"/>
</dbReference>
<dbReference type="InterPro" id="IPR011333">
    <property type="entry name" value="SKP1/BTB/POZ_sf"/>
</dbReference>
<dbReference type="PANTHER" id="PTHR46071">
    <property type="entry name" value="ANKYRIN REPEAT AND BTB/POZ DOMAIN-CONTAINING"/>
    <property type="match status" value="1"/>
</dbReference>
<dbReference type="PANTHER" id="PTHR46071:SF3">
    <property type="entry name" value="ANKYRIN REPEAT AND BTB_POZ DOMAIN-CONTAINING PROTEIN 2"/>
    <property type="match status" value="1"/>
</dbReference>
<dbReference type="Pfam" id="PF00023">
    <property type="entry name" value="Ank"/>
    <property type="match status" value="1"/>
</dbReference>
<dbReference type="Pfam" id="PF12796">
    <property type="entry name" value="Ank_2"/>
    <property type="match status" value="1"/>
</dbReference>
<dbReference type="Pfam" id="PF00651">
    <property type="entry name" value="BTB"/>
    <property type="match status" value="1"/>
</dbReference>
<dbReference type="SMART" id="SM00248">
    <property type="entry name" value="ANK"/>
    <property type="match status" value="5"/>
</dbReference>
<dbReference type="SMART" id="SM00225">
    <property type="entry name" value="BTB"/>
    <property type="match status" value="1"/>
</dbReference>
<dbReference type="SUPFAM" id="SSF48403">
    <property type="entry name" value="Ankyrin repeat"/>
    <property type="match status" value="1"/>
</dbReference>
<dbReference type="SUPFAM" id="SSF47113">
    <property type="entry name" value="Histone-fold"/>
    <property type="match status" value="2"/>
</dbReference>
<dbReference type="SUPFAM" id="SSF54695">
    <property type="entry name" value="POZ domain"/>
    <property type="match status" value="1"/>
</dbReference>
<dbReference type="PROSITE" id="PS50297">
    <property type="entry name" value="ANK_REP_REGION"/>
    <property type="match status" value="1"/>
</dbReference>
<dbReference type="PROSITE" id="PS50088">
    <property type="entry name" value="ANK_REPEAT"/>
    <property type="match status" value="3"/>
</dbReference>
<dbReference type="PROSITE" id="PS50097">
    <property type="entry name" value="BTB"/>
    <property type="match status" value="1"/>
</dbReference>
<name>ABTB2_MOUSE</name>
<protein>
    <recommendedName>
        <fullName>Ankyrin repeat and BTB/POZ domain-containing protein 2</fullName>
    </recommendedName>
</protein>
<feature type="chain" id="PRO_0000066888" description="Ankyrin repeat and BTB/POZ domain-containing protein 2">
    <location>
        <begin position="1"/>
        <end position="1024"/>
    </location>
</feature>
<feature type="repeat" description="ANK 1">
    <location>
        <begin position="521"/>
        <end position="550"/>
    </location>
</feature>
<feature type="repeat" description="ANK 2">
    <location>
        <begin position="567"/>
        <end position="596"/>
    </location>
</feature>
<feature type="repeat" description="ANK 3">
    <location>
        <begin position="606"/>
        <end position="635"/>
    </location>
</feature>
<feature type="repeat" description="ANK 4">
    <location>
        <begin position="649"/>
        <end position="678"/>
    </location>
</feature>
<feature type="domain" description="BTB" evidence="2">
    <location>
        <begin position="844"/>
        <end position="913"/>
    </location>
</feature>
<keyword id="KW-0040">ANK repeat</keyword>
<keyword id="KW-1185">Reference proteome</keyword>
<keyword id="KW-0677">Repeat</keyword>
<proteinExistence type="evidence at protein level"/>
<evidence type="ECO:0000250" key="1"/>
<evidence type="ECO:0000255" key="2">
    <source>
        <dbReference type="PROSITE-ProRule" id="PRU00037"/>
    </source>
</evidence>
<reference key="1">
    <citation type="journal article" date="2004" name="Genome Res.">
        <title>The status, quality, and expansion of the NIH full-length cDNA project: the Mammalian Gene Collection (MGC).</title>
        <authorList>
            <consortium name="The MGC Project Team"/>
        </authorList>
    </citation>
    <scope>NUCLEOTIDE SEQUENCE [LARGE SCALE MRNA]</scope>
    <source>
        <tissue>Eye</tissue>
    </source>
</reference>
<reference key="2">
    <citation type="journal article" date="2010" name="Cell">
        <title>A tissue-specific atlas of mouse protein phosphorylation and expression.</title>
        <authorList>
            <person name="Huttlin E.L."/>
            <person name="Jedrychowski M.P."/>
            <person name="Elias J.E."/>
            <person name="Goswami T."/>
            <person name="Rad R."/>
            <person name="Beausoleil S.A."/>
            <person name="Villen J."/>
            <person name="Haas W."/>
            <person name="Sowa M.E."/>
            <person name="Gygi S.P."/>
        </authorList>
    </citation>
    <scope>IDENTIFICATION BY MASS SPECTROMETRY [LARGE SCALE ANALYSIS]</scope>
    <source>
        <tissue>Heart</tissue>
        <tissue>Liver</tissue>
        <tissue>Testis</tissue>
    </source>
</reference>